<accession>Q7VNV5</accession>
<gene>
    <name evidence="1" type="primary">pyrG</name>
    <name type="ordered locus">HD_0373</name>
</gene>
<sequence length="545" mass="59853">MATNYIFVTGGVVSSLGKGIAAASLASILEARGLNVTIMKLDPYINVDPGTMSPTQHGEVFVTQDGAETDLDLGHYERFIRSKMSKANNFTSGKIYSEVLRKERRGDYLGATIQVIPHITNEIKARVIEGGKGRDVVIVEVGGTVGDIESLPFLEALRQLAVDVGREKTLFMHLTLVPYIPTAGEVKTKPTQHSVKELLSIGIQPDVLICRSDRTIPANERKKIALFCNVPERAVISLKDVDSIYRIPELLKSQALDSFVCDRFRLECPEADLSEWEQVLYRQANPTGEVTIGMVGKYVELPDAYKSVNEALKHAGLTSRLSVNIKYIDSQDIETKGTELLDGLDAILVPGGFGYRGVEGKIRTAQYARENNIPYLGICLGMQIALIEYARNVAGLTEANSSEFDPACSQPVIGLITEWQDESGNVETRTDKSDLGGTMRLGAQQCHLIEGTKAREIYGAEAIVERHRHRYEVNNVLLPTIEAAGLKVSGVSADRKLVEIIEVPNHPWFIAAQFHPEFTSTPRDGHPLFAGFVAAAKAYQDSRKA</sequence>
<feature type="chain" id="PRO_0000138187" description="CTP synthase">
    <location>
        <begin position="1"/>
        <end position="545"/>
    </location>
</feature>
<feature type="domain" description="Glutamine amidotransferase type-1" evidence="1">
    <location>
        <begin position="291"/>
        <end position="542"/>
    </location>
</feature>
<feature type="region of interest" description="Amidoligase domain" evidence="1">
    <location>
        <begin position="1"/>
        <end position="266"/>
    </location>
</feature>
<feature type="active site" description="Nucleophile; for glutamine hydrolysis" evidence="1">
    <location>
        <position position="379"/>
    </location>
</feature>
<feature type="active site" evidence="1">
    <location>
        <position position="515"/>
    </location>
</feature>
<feature type="active site" evidence="1">
    <location>
        <position position="517"/>
    </location>
</feature>
<feature type="binding site" evidence="1">
    <location>
        <position position="14"/>
    </location>
    <ligand>
        <name>CTP</name>
        <dbReference type="ChEBI" id="CHEBI:37563"/>
        <note>allosteric inhibitor</note>
    </ligand>
</feature>
<feature type="binding site" evidence="1">
    <location>
        <position position="14"/>
    </location>
    <ligand>
        <name>UTP</name>
        <dbReference type="ChEBI" id="CHEBI:46398"/>
    </ligand>
</feature>
<feature type="binding site" evidence="1">
    <location>
        <begin position="15"/>
        <end position="20"/>
    </location>
    <ligand>
        <name>ATP</name>
        <dbReference type="ChEBI" id="CHEBI:30616"/>
    </ligand>
</feature>
<feature type="binding site" evidence="1">
    <location>
        <position position="72"/>
    </location>
    <ligand>
        <name>ATP</name>
        <dbReference type="ChEBI" id="CHEBI:30616"/>
    </ligand>
</feature>
<feature type="binding site" evidence="1">
    <location>
        <position position="72"/>
    </location>
    <ligand>
        <name>Mg(2+)</name>
        <dbReference type="ChEBI" id="CHEBI:18420"/>
    </ligand>
</feature>
<feature type="binding site" evidence="1">
    <location>
        <position position="140"/>
    </location>
    <ligand>
        <name>Mg(2+)</name>
        <dbReference type="ChEBI" id="CHEBI:18420"/>
    </ligand>
</feature>
<feature type="binding site" evidence="1">
    <location>
        <begin position="147"/>
        <end position="149"/>
    </location>
    <ligand>
        <name>CTP</name>
        <dbReference type="ChEBI" id="CHEBI:37563"/>
        <note>allosteric inhibitor</note>
    </ligand>
</feature>
<feature type="binding site" evidence="1">
    <location>
        <begin position="187"/>
        <end position="192"/>
    </location>
    <ligand>
        <name>CTP</name>
        <dbReference type="ChEBI" id="CHEBI:37563"/>
        <note>allosteric inhibitor</note>
    </ligand>
</feature>
<feature type="binding site" evidence="1">
    <location>
        <begin position="187"/>
        <end position="192"/>
    </location>
    <ligand>
        <name>UTP</name>
        <dbReference type="ChEBI" id="CHEBI:46398"/>
    </ligand>
</feature>
<feature type="binding site" evidence="1">
    <location>
        <position position="223"/>
    </location>
    <ligand>
        <name>CTP</name>
        <dbReference type="ChEBI" id="CHEBI:37563"/>
        <note>allosteric inhibitor</note>
    </ligand>
</feature>
<feature type="binding site" evidence="1">
    <location>
        <position position="223"/>
    </location>
    <ligand>
        <name>UTP</name>
        <dbReference type="ChEBI" id="CHEBI:46398"/>
    </ligand>
</feature>
<feature type="binding site" evidence="1">
    <location>
        <begin position="239"/>
        <end position="241"/>
    </location>
    <ligand>
        <name>ATP</name>
        <dbReference type="ChEBI" id="CHEBI:30616"/>
    </ligand>
</feature>
<feature type="binding site" evidence="1">
    <location>
        <position position="352"/>
    </location>
    <ligand>
        <name>L-glutamine</name>
        <dbReference type="ChEBI" id="CHEBI:58359"/>
    </ligand>
</feature>
<feature type="binding site" evidence="1">
    <location>
        <begin position="380"/>
        <end position="383"/>
    </location>
    <ligand>
        <name>L-glutamine</name>
        <dbReference type="ChEBI" id="CHEBI:58359"/>
    </ligand>
</feature>
<feature type="binding site" evidence="1">
    <location>
        <position position="403"/>
    </location>
    <ligand>
        <name>L-glutamine</name>
        <dbReference type="ChEBI" id="CHEBI:58359"/>
    </ligand>
</feature>
<feature type="binding site" evidence="1">
    <location>
        <position position="470"/>
    </location>
    <ligand>
        <name>L-glutamine</name>
        <dbReference type="ChEBI" id="CHEBI:58359"/>
    </ligand>
</feature>
<name>PYRG_HAEDU</name>
<dbReference type="EC" id="6.3.4.2" evidence="1"/>
<dbReference type="EMBL" id="AE017143">
    <property type="protein sequence ID" value="AAP95343.1"/>
    <property type="molecule type" value="Genomic_DNA"/>
</dbReference>
<dbReference type="RefSeq" id="WP_010944396.1">
    <property type="nucleotide sequence ID" value="NC_002940.2"/>
</dbReference>
<dbReference type="SMR" id="Q7VNV5"/>
<dbReference type="STRING" id="233412.HD_0373"/>
<dbReference type="KEGG" id="hdu:HD_0373"/>
<dbReference type="eggNOG" id="COG0504">
    <property type="taxonomic scope" value="Bacteria"/>
</dbReference>
<dbReference type="HOGENOM" id="CLU_011675_5_0_6"/>
<dbReference type="OrthoDB" id="9801107at2"/>
<dbReference type="UniPathway" id="UPA00159">
    <property type="reaction ID" value="UER00277"/>
</dbReference>
<dbReference type="Proteomes" id="UP000001022">
    <property type="component" value="Chromosome"/>
</dbReference>
<dbReference type="GO" id="GO:0005829">
    <property type="term" value="C:cytosol"/>
    <property type="evidence" value="ECO:0007669"/>
    <property type="project" value="TreeGrafter"/>
</dbReference>
<dbReference type="GO" id="GO:0005524">
    <property type="term" value="F:ATP binding"/>
    <property type="evidence" value="ECO:0007669"/>
    <property type="project" value="UniProtKB-KW"/>
</dbReference>
<dbReference type="GO" id="GO:0003883">
    <property type="term" value="F:CTP synthase activity"/>
    <property type="evidence" value="ECO:0007669"/>
    <property type="project" value="UniProtKB-UniRule"/>
</dbReference>
<dbReference type="GO" id="GO:0004359">
    <property type="term" value="F:glutaminase activity"/>
    <property type="evidence" value="ECO:0007669"/>
    <property type="project" value="RHEA"/>
</dbReference>
<dbReference type="GO" id="GO:0042802">
    <property type="term" value="F:identical protein binding"/>
    <property type="evidence" value="ECO:0007669"/>
    <property type="project" value="TreeGrafter"/>
</dbReference>
<dbReference type="GO" id="GO:0046872">
    <property type="term" value="F:metal ion binding"/>
    <property type="evidence" value="ECO:0007669"/>
    <property type="project" value="UniProtKB-KW"/>
</dbReference>
<dbReference type="GO" id="GO:0044210">
    <property type="term" value="P:'de novo' CTP biosynthetic process"/>
    <property type="evidence" value="ECO:0007669"/>
    <property type="project" value="UniProtKB-UniRule"/>
</dbReference>
<dbReference type="GO" id="GO:0019856">
    <property type="term" value="P:pyrimidine nucleobase biosynthetic process"/>
    <property type="evidence" value="ECO:0007669"/>
    <property type="project" value="TreeGrafter"/>
</dbReference>
<dbReference type="CDD" id="cd03113">
    <property type="entry name" value="CTPS_N"/>
    <property type="match status" value="1"/>
</dbReference>
<dbReference type="CDD" id="cd01746">
    <property type="entry name" value="GATase1_CTP_Synthase"/>
    <property type="match status" value="1"/>
</dbReference>
<dbReference type="FunFam" id="3.40.50.300:FF:000009">
    <property type="entry name" value="CTP synthase"/>
    <property type="match status" value="1"/>
</dbReference>
<dbReference type="FunFam" id="3.40.50.880:FF:000002">
    <property type="entry name" value="CTP synthase"/>
    <property type="match status" value="1"/>
</dbReference>
<dbReference type="Gene3D" id="3.40.50.880">
    <property type="match status" value="1"/>
</dbReference>
<dbReference type="Gene3D" id="3.40.50.300">
    <property type="entry name" value="P-loop containing nucleotide triphosphate hydrolases"/>
    <property type="match status" value="1"/>
</dbReference>
<dbReference type="HAMAP" id="MF_01227">
    <property type="entry name" value="PyrG"/>
    <property type="match status" value="1"/>
</dbReference>
<dbReference type="InterPro" id="IPR029062">
    <property type="entry name" value="Class_I_gatase-like"/>
</dbReference>
<dbReference type="InterPro" id="IPR004468">
    <property type="entry name" value="CTP_synthase"/>
</dbReference>
<dbReference type="InterPro" id="IPR017456">
    <property type="entry name" value="CTP_synthase_N"/>
</dbReference>
<dbReference type="InterPro" id="IPR017926">
    <property type="entry name" value="GATASE"/>
</dbReference>
<dbReference type="InterPro" id="IPR033828">
    <property type="entry name" value="GATase1_CTP_Synthase"/>
</dbReference>
<dbReference type="InterPro" id="IPR027417">
    <property type="entry name" value="P-loop_NTPase"/>
</dbReference>
<dbReference type="NCBIfam" id="NF003792">
    <property type="entry name" value="PRK05380.1"/>
    <property type="match status" value="1"/>
</dbReference>
<dbReference type="NCBIfam" id="TIGR00337">
    <property type="entry name" value="PyrG"/>
    <property type="match status" value="1"/>
</dbReference>
<dbReference type="PANTHER" id="PTHR11550">
    <property type="entry name" value="CTP SYNTHASE"/>
    <property type="match status" value="1"/>
</dbReference>
<dbReference type="PANTHER" id="PTHR11550:SF0">
    <property type="entry name" value="CTP SYNTHASE-RELATED"/>
    <property type="match status" value="1"/>
</dbReference>
<dbReference type="Pfam" id="PF06418">
    <property type="entry name" value="CTP_synth_N"/>
    <property type="match status" value="1"/>
</dbReference>
<dbReference type="Pfam" id="PF00117">
    <property type="entry name" value="GATase"/>
    <property type="match status" value="1"/>
</dbReference>
<dbReference type="SUPFAM" id="SSF52317">
    <property type="entry name" value="Class I glutamine amidotransferase-like"/>
    <property type="match status" value="1"/>
</dbReference>
<dbReference type="SUPFAM" id="SSF52540">
    <property type="entry name" value="P-loop containing nucleoside triphosphate hydrolases"/>
    <property type="match status" value="1"/>
</dbReference>
<dbReference type="PROSITE" id="PS51273">
    <property type="entry name" value="GATASE_TYPE_1"/>
    <property type="match status" value="1"/>
</dbReference>
<organism>
    <name type="scientific">Haemophilus ducreyi (strain 35000HP / ATCC 700724)</name>
    <dbReference type="NCBI Taxonomy" id="233412"/>
    <lineage>
        <taxon>Bacteria</taxon>
        <taxon>Pseudomonadati</taxon>
        <taxon>Pseudomonadota</taxon>
        <taxon>Gammaproteobacteria</taxon>
        <taxon>Pasteurellales</taxon>
        <taxon>Pasteurellaceae</taxon>
        <taxon>Haemophilus</taxon>
    </lineage>
</organism>
<comment type="function">
    <text evidence="1">Catalyzes the ATP-dependent amination of UTP to CTP with either L-glutamine or ammonia as the source of nitrogen. Regulates intracellular CTP levels through interactions with the four ribonucleotide triphosphates.</text>
</comment>
<comment type="catalytic activity">
    <reaction evidence="1">
        <text>UTP + L-glutamine + ATP + H2O = CTP + L-glutamate + ADP + phosphate + 2 H(+)</text>
        <dbReference type="Rhea" id="RHEA:26426"/>
        <dbReference type="ChEBI" id="CHEBI:15377"/>
        <dbReference type="ChEBI" id="CHEBI:15378"/>
        <dbReference type="ChEBI" id="CHEBI:29985"/>
        <dbReference type="ChEBI" id="CHEBI:30616"/>
        <dbReference type="ChEBI" id="CHEBI:37563"/>
        <dbReference type="ChEBI" id="CHEBI:43474"/>
        <dbReference type="ChEBI" id="CHEBI:46398"/>
        <dbReference type="ChEBI" id="CHEBI:58359"/>
        <dbReference type="ChEBI" id="CHEBI:456216"/>
        <dbReference type="EC" id="6.3.4.2"/>
    </reaction>
</comment>
<comment type="catalytic activity">
    <reaction evidence="1">
        <text>L-glutamine + H2O = L-glutamate + NH4(+)</text>
        <dbReference type="Rhea" id="RHEA:15889"/>
        <dbReference type="ChEBI" id="CHEBI:15377"/>
        <dbReference type="ChEBI" id="CHEBI:28938"/>
        <dbReference type="ChEBI" id="CHEBI:29985"/>
        <dbReference type="ChEBI" id="CHEBI:58359"/>
    </reaction>
</comment>
<comment type="catalytic activity">
    <reaction evidence="1">
        <text>UTP + NH4(+) + ATP = CTP + ADP + phosphate + 2 H(+)</text>
        <dbReference type="Rhea" id="RHEA:16597"/>
        <dbReference type="ChEBI" id="CHEBI:15378"/>
        <dbReference type="ChEBI" id="CHEBI:28938"/>
        <dbReference type="ChEBI" id="CHEBI:30616"/>
        <dbReference type="ChEBI" id="CHEBI:37563"/>
        <dbReference type="ChEBI" id="CHEBI:43474"/>
        <dbReference type="ChEBI" id="CHEBI:46398"/>
        <dbReference type="ChEBI" id="CHEBI:456216"/>
    </reaction>
</comment>
<comment type="activity regulation">
    <text evidence="1">Allosterically activated by GTP, when glutamine is the substrate; GTP has no effect on the reaction when ammonia is the substrate. The allosteric effector GTP functions by stabilizing the protein conformation that binds the tetrahedral intermediate(s) formed during glutamine hydrolysis. Inhibited by the product CTP, via allosteric rather than competitive inhibition.</text>
</comment>
<comment type="pathway">
    <text evidence="1">Pyrimidine metabolism; CTP biosynthesis via de novo pathway; CTP from UDP: step 2/2.</text>
</comment>
<comment type="subunit">
    <text evidence="1">Homotetramer.</text>
</comment>
<comment type="miscellaneous">
    <text evidence="1">CTPSs have evolved a hybrid strategy for distinguishing between UTP and CTP. The overlapping regions of the product feedback inhibitory and substrate sites recognize a common feature in both compounds, the triphosphate moiety. To differentiate isosteric substrate and product pyrimidine rings, an additional pocket far from the expected kinase/ligase catalytic site, specifically recognizes the cytosine and ribose portions of the product inhibitor.</text>
</comment>
<comment type="similarity">
    <text evidence="1">Belongs to the CTP synthase family.</text>
</comment>
<proteinExistence type="inferred from homology"/>
<evidence type="ECO:0000255" key="1">
    <source>
        <dbReference type="HAMAP-Rule" id="MF_01227"/>
    </source>
</evidence>
<protein>
    <recommendedName>
        <fullName evidence="1">CTP synthase</fullName>
        <ecNumber evidence="1">6.3.4.2</ecNumber>
    </recommendedName>
    <alternativeName>
        <fullName evidence="1">Cytidine 5'-triphosphate synthase</fullName>
    </alternativeName>
    <alternativeName>
        <fullName evidence="1">Cytidine triphosphate synthetase</fullName>
        <shortName evidence="1">CTP synthetase</shortName>
        <shortName evidence="1">CTPS</shortName>
    </alternativeName>
    <alternativeName>
        <fullName evidence="1">UTP--ammonia ligase</fullName>
    </alternativeName>
</protein>
<reference key="1">
    <citation type="submission" date="2003-06" db="EMBL/GenBank/DDBJ databases">
        <title>The complete genome sequence of Haemophilus ducreyi.</title>
        <authorList>
            <person name="Munson R.S. Jr."/>
            <person name="Ray W.C."/>
            <person name="Mahairas G."/>
            <person name="Sabo P."/>
            <person name="Mungur R."/>
            <person name="Johnson L."/>
            <person name="Nguyen D."/>
            <person name="Wang J."/>
            <person name="Forst C."/>
            <person name="Hood L."/>
        </authorList>
    </citation>
    <scope>NUCLEOTIDE SEQUENCE [LARGE SCALE GENOMIC DNA]</scope>
    <source>
        <strain>35000HP / ATCC 700724</strain>
    </source>
</reference>
<keyword id="KW-0067">ATP-binding</keyword>
<keyword id="KW-0315">Glutamine amidotransferase</keyword>
<keyword id="KW-0436">Ligase</keyword>
<keyword id="KW-0460">Magnesium</keyword>
<keyword id="KW-0479">Metal-binding</keyword>
<keyword id="KW-0547">Nucleotide-binding</keyword>
<keyword id="KW-0665">Pyrimidine biosynthesis</keyword>
<keyword id="KW-1185">Reference proteome</keyword>